<keyword id="KW-1003">Cell membrane</keyword>
<keyword id="KW-0472">Membrane</keyword>
<keyword id="KW-0812">Transmembrane</keyword>
<keyword id="KW-1133">Transmembrane helix</keyword>
<evidence type="ECO:0000255" key="1">
    <source>
        <dbReference type="HAMAP-Rule" id="MF_00709"/>
    </source>
</evidence>
<accession>A1KIY4</accession>
<name>FRDD_MYCBP</name>
<proteinExistence type="inferred from homology"/>
<protein>
    <recommendedName>
        <fullName evidence="1">Fumarate reductase subunit D</fullName>
    </recommendedName>
    <alternativeName>
        <fullName evidence="1">Quinol-fumarate reductase subunit D</fullName>
        <shortName evidence="1">QFR subunit D</shortName>
    </alternativeName>
</protein>
<dbReference type="EMBL" id="AM408590">
    <property type="protein sequence ID" value="CAL71593.1"/>
    <property type="molecule type" value="Genomic_DNA"/>
</dbReference>
<dbReference type="RefSeq" id="WP_003407771.1">
    <property type="nucleotide sequence ID" value="NC_008769.1"/>
</dbReference>
<dbReference type="SMR" id="A1KIY4"/>
<dbReference type="KEGG" id="mbb:BCG_1606"/>
<dbReference type="HOGENOM" id="CLU_168367_0_0_11"/>
<dbReference type="Proteomes" id="UP000001472">
    <property type="component" value="Chromosome"/>
</dbReference>
<dbReference type="GO" id="GO:0045283">
    <property type="term" value="C:fumarate reductase complex"/>
    <property type="evidence" value="ECO:0007669"/>
    <property type="project" value="UniProtKB-UniRule"/>
</dbReference>
<dbReference type="GO" id="GO:0005886">
    <property type="term" value="C:plasma membrane"/>
    <property type="evidence" value="ECO:0007669"/>
    <property type="project" value="UniProtKB-SubCell"/>
</dbReference>
<dbReference type="GO" id="GO:0000104">
    <property type="term" value="F:succinate dehydrogenase activity"/>
    <property type="evidence" value="ECO:0007669"/>
    <property type="project" value="UniProtKB-UniRule"/>
</dbReference>
<dbReference type="GO" id="GO:0006106">
    <property type="term" value="P:fumarate metabolic process"/>
    <property type="evidence" value="ECO:0007669"/>
    <property type="project" value="InterPro"/>
</dbReference>
<dbReference type="Gene3D" id="1.20.1300.10">
    <property type="entry name" value="Fumarate reductase/succinate dehydrogenase, transmembrane subunit"/>
    <property type="match status" value="1"/>
</dbReference>
<dbReference type="HAMAP" id="MF_00709">
    <property type="entry name" value="Fumarate_red_D"/>
    <property type="match status" value="1"/>
</dbReference>
<dbReference type="InterPro" id="IPR003418">
    <property type="entry name" value="Fumarate_red_D"/>
</dbReference>
<dbReference type="InterPro" id="IPR034804">
    <property type="entry name" value="SQR/QFR_C/D"/>
</dbReference>
<dbReference type="NCBIfam" id="NF003977">
    <property type="entry name" value="PRK05470.1-1"/>
    <property type="match status" value="1"/>
</dbReference>
<dbReference type="Pfam" id="PF02313">
    <property type="entry name" value="Fumarate_red_D"/>
    <property type="match status" value="1"/>
</dbReference>
<dbReference type="PIRSF" id="PIRSF000179">
    <property type="entry name" value="FrdD"/>
    <property type="match status" value="1"/>
</dbReference>
<dbReference type="SUPFAM" id="SSF81343">
    <property type="entry name" value="Fumarate reductase respiratory complex transmembrane subunits"/>
    <property type="match status" value="1"/>
</dbReference>
<feature type="chain" id="PRO_1000045555" description="Fumarate reductase subunit D">
    <location>
        <begin position="1"/>
        <end position="125"/>
    </location>
</feature>
<feature type="transmembrane region" description="Helical" evidence="1">
    <location>
        <begin position="29"/>
        <end position="49"/>
    </location>
</feature>
<feature type="transmembrane region" description="Helical" evidence="1">
    <location>
        <begin position="64"/>
        <end position="84"/>
    </location>
</feature>
<feature type="transmembrane region" description="Helical" evidence="1">
    <location>
        <begin position="102"/>
        <end position="122"/>
    </location>
</feature>
<organism>
    <name type="scientific">Mycobacterium bovis (strain BCG / Pasteur 1173P2)</name>
    <dbReference type="NCBI Taxonomy" id="410289"/>
    <lineage>
        <taxon>Bacteria</taxon>
        <taxon>Bacillati</taxon>
        <taxon>Actinomycetota</taxon>
        <taxon>Actinomycetes</taxon>
        <taxon>Mycobacteriales</taxon>
        <taxon>Mycobacteriaceae</taxon>
        <taxon>Mycobacterium</taxon>
        <taxon>Mycobacterium tuberculosis complex</taxon>
    </lineage>
</organism>
<sequence>MTPSTSDARSRRRSAEPFLWLLFSAGGMVTALVAPVLLLLFGLAFPLGWLDAPDHGHLLAMVRNPITKLVVLVLVVLALFHAAHRFRFVLDHGLQLGRFDRVIALWCYGMAVLGSATAGWMLLTM</sequence>
<comment type="function">
    <text evidence="1">Anchors the catalytic components of the fumarate reductase complex to the cell membrane, binds quinones.</text>
</comment>
<comment type="subunit">
    <text evidence="1">Part of an enzyme complex containing four subunits: a flavoprotein (FrdA), an iron-sulfur protein (FrdB), and two hydrophobic anchor proteins (FrdC and FrdD).</text>
</comment>
<comment type="subcellular location">
    <subcellularLocation>
        <location evidence="1">Cell membrane</location>
        <topology evidence="1">Multi-pass membrane protein</topology>
    </subcellularLocation>
</comment>
<comment type="similarity">
    <text evidence="1">Belongs to the FrdD family.</text>
</comment>
<reference key="1">
    <citation type="journal article" date="2007" name="Proc. Natl. Acad. Sci. U.S.A.">
        <title>Genome plasticity of BCG and impact on vaccine efficacy.</title>
        <authorList>
            <person name="Brosch R."/>
            <person name="Gordon S.V."/>
            <person name="Garnier T."/>
            <person name="Eiglmeier K."/>
            <person name="Frigui W."/>
            <person name="Valenti P."/>
            <person name="Dos Santos S."/>
            <person name="Duthoy S."/>
            <person name="Lacroix C."/>
            <person name="Garcia-Pelayo C."/>
            <person name="Inwald J.K."/>
            <person name="Golby P."/>
            <person name="Garcia J.N."/>
            <person name="Hewinson R.G."/>
            <person name="Behr M.A."/>
            <person name="Quail M.A."/>
            <person name="Churcher C."/>
            <person name="Barrell B.G."/>
            <person name="Parkhill J."/>
            <person name="Cole S.T."/>
        </authorList>
    </citation>
    <scope>NUCLEOTIDE SEQUENCE [LARGE SCALE GENOMIC DNA]</scope>
    <source>
        <strain>BCG / Pasteur 1173P2</strain>
    </source>
</reference>
<gene>
    <name evidence="1" type="primary">frdD</name>
    <name type="ordered locus">BCG_1606</name>
</gene>